<name>ALR_CERSK</name>
<feature type="chain" id="PRO_1000164607" description="Alanine racemase">
    <location>
        <begin position="1"/>
        <end position="349"/>
    </location>
</feature>
<feature type="active site" description="Proton acceptor; specific for D-alanine" evidence="1">
    <location>
        <position position="35"/>
    </location>
</feature>
<feature type="active site" description="Proton acceptor; specific for L-alanine" evidence="1">
    <location>
        <position position="244"/>
    </location>
</feature>
<feature type="binding site" evidence="1">
    <location>
        <position position="130"/>
    </location>
    <ligand>
        <name>substrate</name>
    </ligand>
</feature>
<feature type="binding site" evidence="1">
    <location>
        <position position="292"/>
    </location>
    <ligand>
        <name>substrate</name>
    </ligand>
</feature>
<feature type="modified residue" description="N6-(pyridoxal phosphate)lysine" evidence="1">
    <location>
        <position position="35"/>
    </location>
</feature>
<comment type="function">
    <text evidence="1">Catalyzes the interconversion of L-alanine and D-alanine. May also act on other amino acids.</text>
</comment>
<comment type="catalytic activity">
    <reaction evidence="1">
        <text>L-alanine = D-alanine</text>
        <dbReference type="Rhea" id="RHEA:20249"/>
        <dbReference type="ChEBI" id="CHEBI:57416"/>
        <dbReference type="ChEBI" id="CHEBI:57972"/>
        <dbReference type="EC" id="5.1.1.1"/>
    </reaction>
</comment>
<comment type="cofactor">
    <cofactor evidence="1">
        <name>pyridoxal 5'-phosphate</name>
        <dbReference type="ChEBI" id="CHEBI:597326"/>
    </cofactor>
</comment>
<comment type="pathway">
    <text evidence="1">Amino-acid biosynthesis; D-alanine biosynthesis; D-alanine from L-alanine: step 1/1.</text>
</comment>
<comment type="similarity">
    <text evidence="1">Belongs to the alanine racemase family.</text>
</comment>
<dbReference type="EC" id="5.1.1.1" evidence="1"/>
<dbReference type="EMBL" id="CP001150">
    <property type="protein sequence ID" value="ACM00635.1"/>
    <property type="molecule type" value="Genomic_DNA"/>
</dbReference>
<dbReference type="RefSeq" id="WP_009564494.1">
    <property type="nucleotide sequence ID" value="NC_011963.1"/>
</dbReference>
<dbReference type="SMR" id="B9KQC8"/>
<dbReference type="GeneID" id="67446219"/>
<dbReference type="KEGG" id="rsk:RSKD131_0775"/>
<dbReference type="HOGENOM" id="CLU_028393_1_1_5"/>
<dbReference type="UniPathway" id="UPA00042">
    <property type="reaction ID" value="UER00497"/>
</dbReference>
<dbReference type="GO" id="GO:0005829">
    <property type="term" value="C:cytosol"/>
    <property type="evidence" value="ECO:0007669"/>
    <property type="project" value="TreeGrafter"/>
</dbReference>
<dbReference type="GO" id="GO:0008784">
    <property type="term" value="F:alanine racemase activity"/>
    <property type="evidence" value="ECO:0007669"/>
    <property type="project" value="UniProtKB-UniRule"/>
</dbReference>
<dbReference type="GO" id="GO:0030170">
    <property type="term" value="F:pyridoxal phosphate binding"/>
    <property type="evidence" value="ECO:0007669"/>
    <property type="project" value="UniProtKB-UniRule"/>
</dbReference>
<dbReference type="GO" id="GO:0030632">
    <property type="term" value="P:D-alanine biosynthetic process"/>
    <property type="evidence" value="ECO:0007669"/>
    <property type="project" value="UniProtKB-UniRule"/>
</dbReference>
<dbReference type="CDD" id="cd00430">
    <property type="entry name" value="PLPDE_III_AR"/>
    <property type="match status" value="1"/>
</dbReference>
<dbReference type="Gene3D" id="3.20.20.10">
    <property type="entry name" value="Alanine racemase"/>
    <property type="match status" value="1"/>
</dbReference>
<dbReference type="Gene3D" id="2.40.37.10">
    <property type="entry name" value="Lyase, Ornithine Decarboxylase, Chain A, domain 1"/>
    <property type="match status" value="1"/>
</dbReference>
<dbReference type="HAMAP" id="MF_01201">
    <property type="entry name" value="Ala_racemase"/>
    <property type="match status" value="1"/>
</dbReference>
<dbReference type="InterPro" id="IPR000821">
    <property type="entry name" value="Ala_racemase"/>
</dbReference>
<dbReference type="InterPro" id="IPR009006">
    <property type="entry name" value="Ala_racemase/Decarboxylase_C"/>
</dbReference>
<dbReference type="InterPro" id="IPR011079">
    <property type="entry name" value="Ala_racemase_C"/>
</dbReference>
<dbReference type="InterPro" id="IPR001608">
    <property type="entry name" value="Ala_racemase_N"/>
</dbReference>
<dbReference type="InterPro" id="IPR029066">
    <property type="entry name" value="PLP-binding_barrel"/>
</dbReference>
<dbReference type="NCBIfam" id="TIGR00492">
    <property type="entry name" value="alr"/>
    <property type="match status" value="1"/>
</dbReference>
<dbReference type="PANTHER" id="PTHR30511">
    <property type="entry name" value="ALANINE RACEMASE"/>
    <property type="match status" value="1"/>
</dbReference>
<dbReference type="PANTHER" id="PTHR30511:SF0">
    <property type="entry name" value="ALANINE RACEMASE, CATABOLIC-RELATED"/>
    <property type="match status" value="1"/>
</dbReference>
<dbReference type="Pfam" id="PF00842">
    <property type="entry name" value="Ala_racemase_C"/>
    <property type="match status" value="1"/>
</dbReference>
<dbReference type="Pfam" id="PF01168">
    <property type="entry name" value="Ala_racemase_N"/>
    <property type="match status" value="1"/>
</dbReference>
<dbReference type="PRINTS" id="PR00992">
    <property type="entry name" value="ALARACEMASE"/>
</dbReference>
<dbReference type="SMART" id="SM01005">
    <property type="entry name" value="Ala_racemase_C"/>
    <property type="match status" value="1"/>
</dbReference>
<dbReference type="SUPFAM" id="SSF50621">
    <property type="entry name" value="Alanine racemase C-terminal domain-like"/>
    <property type="match status" value="1"/>
</dbReference>
<dbReference type="SUPFAM" id="SSF51419">
    <property type="entry name" value="PLP-binding barrel"/>
    <property type="match status" value="1"/>
</dbReference>
<proteinExistence type="inferred from homology"/>
<reference key="1">
    <citation type="journal article" date="2009" name="J. Bacteriol.">
        <title>Complete genome sequence of Rhodobacter sphaeroides KD131.</title>
        <authorList>
            <person name="Lim S.-K."/>
            <person name="Kim S.J."/>
            <person name="Cha S.H."/>
            <person name="Oh Y.-K."/>
            <person name="Rhee H.-J."/>
            <person name="Kim M.-S."/>
            <person name="Lee J.K."/>
        </authorList>
    </citation>
    <scope>NUCLEOTIDE SEQUENCE [LARGE SCALE GENOMIC DNA]</scope>
    <source>
        <strain>KD131 / KCTC 12085</strain>
    </source>
</reference>
<sequence length="349" mass="37052">MATATLTIDLDAIAANWRALDQMTASDCQTGAVVKADSYGLGAAKVAHALARAGARRFFVATCEEGADVRRALGSGPQICVFSGHMEGDTALIRDFDLTPMLNSIDQLTRHFEALGGQPFGLQLDSGMNRLGLEPGEWEAVAGFALEAGPELLMSHLACSDDPDHPMNAEQLGAFRAMTDGTGVPRSLSATGGILLGPAWHFELTRPGIGLYGGRPFEEARPVVRLSLPVIQVREVEIGEPVGYSNTWTAEHTSTIATVAAGYADGLPRTLSSRATLYAGRVPCPLVGRVSMDLITVDVSHLPEVPETLDILGPHQTPDDLADTAGTIGYEILTSLGRRYQRRYGALAA</sequence>
<protein>
    <recommendedName>
        <fullName evidence="1">Alanine racemase</fullName>
        <ecNumber evidence="1">5.1.1.1</ecNumber>
    </recommendedName>
</protein>
<accession>B9KQC8</accession>
<evidence type="ECO:0000255" key="1">
    <source>
        <dbReference type="HAMAP-Rule" id="MF_01201"/>
    </source>
</evidence>
<gene>
    <name type="primary">alr</name>
    <name type="ordered locus">RSKD131_0775</name>
</gene>
<keyword id="KW-0413">Isomerase</keyword>
<keyword id="KW-0663">Pyridoxal phosphate</keyword>
<organism>
    <name type="scientific">Cereibacter sphaeroides (strain KD131 / KCTC 12085)</name>
    <name type="common">Rhodobacter sphaeroides</name>
    <dbReference type="NCBI Taxonomy" id="557760"/>
    <lineage>
        <taxon>Bacteria</taxon>
        <taxon>Pseudomonadati</taxon>
        <taxon>Pseudomonadota</taxon>
        <taxon>Alphaproteobacteria</taxon>
        <taxon>Rhodobacterales</taxon>
        <taxon>Paracoccaceae</taxon>
        <taxon>Cereibacter</taxon>
    </lineage>
</organism>